<comment type="function">
    <text evidence="1">Part of the ABC transporter complex BtuCDF involved in vitamin B12 import. Involved in the translocation of the substrate across the membrane.</text>
</comment>
<comment type="subunit">
    <text evidence="1">The complex is composed of two ATP-binding proteins (BtuD), two transmembrane proteins (BtuC) and a solute-binding protein (BtuF).</text>
</comment>
<comment type="subcellular location">
    <subcellularLocation>
        <location evidence="1">Cell inner membrane</location>
        <topology evidence="1">Multi-pass membrane protein</topology>
    </subcellularLocation>
</comment>
<comment type="similarity">
    <text evidence="1">Belongs to the binding-protein-dependent transport system permease family. FecCD subfamily.</text>
</comment>
<accession>A6TAH6</accession>
<dbReference type="EMBL" id="CP000647">
    <property type="protein sequence ID" value="ABR77597.1"/>
    <property type="molecule type" value="Genomic_DNA"/>
</dbReference>
<dbReference type="SMR" id="A6TAH6"/>
<dbReference type="STRING" id="272620.KPN_02169"/>
<dbReference type="PaxDb" id="272620-KPN_02169"/>
<dbReference type="EnsemblBacteria" id="ABR77597">
    <property type="protein sequence ID" value="ABR77597"/>
    <property type="gene ID" value="KPN_02169"/>
</dbReference>
<dbReference type="KEGG" id="kpn:KPN_02169"/>
<dbReference type="HOGENOM" id="CLU_013016_0_3_6"/>
<dbReference type="Proteomes" id="UP000000265">
    <property type="component" value="Chromosome"/>
</dbReference>
<dbReference type="GO" id="GO:0005886">
    <property type="term" value="C:plasma membrane"/>
    <property type="evidence" value="ECO:0007669"/>
    <property type="project" value="UniProtKB-SubCell"/>
</dbReference>
<dbReference type="GO" id="GO:0090482">
    <property type="term" value="F:vitamin transmembrane transporter activity"/>
    <property type="evidence" value="ECO:0007669"/>
    <property type="project" value="UniProtKB-UniRule"/>
</dbReference>
<dbReference type="GO" id="GO:0015889">
    <property type="term" value="P:cobalamin transport"/>
    <property type="evidence" value="ECO:0007669"/>
    <property type="project" value="UniProtKB-UniRule"/>
</dbReference>
<dbReference type="CDD" id="cd06550">
    <property type="entry name" value="TM_ABC_iron-siderophores_like"/>
    <property type="match status" value="1"/>
</dbReference>
<dbReference type="FunFam" id="1.10.3470.10:FF:000001">
    <property type="entry name" value="Vitamin B12 ABC transporter permease BtuC"/>
    <property type="match status" value="1"/>
</dbReference>
<dbReference type="Gene3D" id="1.10.3470.10">
    <property type="entry name" value="ABC transporter involved in vitamin B12 uptake, BtuC"/>
    <property type="match status" value="1"/>
</dbReference>
<dbReference type="HAMAP" id="MF_01004">
    <property type="entry name" value="BtuC"/>
    <property type="match status" value="1"/>
</dbReference>
<dbReference type="InterPro" id="IPR037294">
    <property type="entry name" value="ABC_BtuC-like"/>
</dbReference>
<dbReference type="InterPro" id="IPR023691">
    <property type="entry name" value="ABC_transptr_BtuC"/>
</dbReference>
<dbReference type="InterPro" id="IPR000522">
    <property type="entry name" value="ABC_transptr_permease_BtuC"/>
</dbReference>
<dbReference type="NCBIfam" id="NF003001">
    <property type="entry name" value="PRK03784.1"/>
    <property type="match status" value="1"/>
</dbReference>
<dbReference type="PANTHER" id="PTHR30472">
    <property type="entry name" value="FERRIC ENTEROBACTIN TRANSPORT SYSTEM PERMEASE PROTEIN"/>
    <property type="match status" value="1"/>
</dbReference>
<dbReference type="PANTHER" id="PTHR30472:SF29">
    <property type="entry name" value="VITAMIN B12 IMPORT SYSTEM PERMEASE PROTEIN BTUC"/>
    <property type="match status" value="1"/>
</dbReference>
<dbReference type="Pfam" id="PF01032">
    <property type="entry name" value="FecCD"/>
    <property type="match status" value="1"/>
</dbReference>
<dbReference type="SUPFAM" id="SSF81345">
    <property type="entry name" value="ABC transporter involved in vitamin B12 uptake, BtuC"/>
    <property type="match status" value="1"/>
</dbReference>
<reference key="1">
    <citation type="submission" date="2006-09" db="EMBL/GenBank/DDBJ databases">
        <authorList>
            <consortium name="The Klebsiella pneumonia Genome Sequencing Project"/>
            <person name="McClelland M."/>
            <person name="Sanderson E.K."/>
            <person name="Spieth J."/>
            <person name="Clifton W.S."/>
            <person name="Latreille P."/>
            <person name="Sabo A."/>
            <person name="Pepin K."/>
            <person name="Bhonagiri V."/>
            <person name="Porwollik S."/>
            <person name="Ali J."/>
            <person name="Wilson R.K."/>
        </authorList>
    </citation>
    <scope>NUCLEOTIDE SEQUENCE [LARGE SCALE GENOMIC DNA]</scope>
    <source>
        <strain>ATCC 700721 / MGH 78578</strain>
    </source>
</reference>
<sequence length="331" mass="35579">MESMLTLAHLQQRRSRRWLFGLTLLLLVTLLISLCAGEQWIPPGEWLSAKGQLFIWQIRLPRTLAVLLVGAALALSGAIMQALFENPLAEPGLLGISNGAGVGLIAAVLLGKGVLPGWALGLCAIFGALLITFILLRFARRHLSTSRLLLAGVALGIICSALMTWAVYFSTSFDLRQLMYWMMGGFGGVDWQQLWLMIALLPVLCWVCLQSQPLNLLALGEVSARQLGLPLWLWRKLLVVATGWMVGVSVALAGAIGFIGLVIPHILRLCGLSDHRVLLPACMMAGASALLGADIIARLALSAAELPIGVVTATLGAPVFIWLLLRSRGRG</sequence>
<evidence type="ECO:0000255" key="1">
    <source>
        <dbReference type="HAMAP-Rule" id="MF_01004"/>
    </source>
</evidence>
<proteinExistence type="inferred from homology"/>
<name>BTUC_KLEP7</name>
<protein>
    <recommendedName>
        <fullName evidence="1">Vitamin B12 import system permease protein BtuC</fullName>
    </recommendedName>
</protein>
<gene>
    <name evidence="1" type="primary">btuC</name>
    <name type="ordered locus">KPN78578_21360</name>
    <name type="ORF">KPN_02169</name>
</gene>
<keyword id="KW-0997">Cell inner membrane</keyword>
<keyword id="KW-1003">Cell membrane</keyword>
<keyword id="KW-0472">Membrane</keyword>
<keyword id="KW-0812">Transmembrane</keyword>
<keyword id="KW-1133">Transmembrane helix</keyword>
<keyword id="KW-0813">Transport</keyword>
<feature type="chain" id="PRO_0000318865" description="Vitamin B12 import system permease protein BtuC">
    <location>
        <begin position="1"/>
        <end position="331"/>
    </location>
</feature>
<feature type="transmembrane region" description="Helical" evidence="1">
    <location>
        <begin position="18"/>
        <end position="38"/>
    </location>
</feature>
<feature type="transmembrane region" description="Helical" evidence="1">
    <location>
        <begin position="64"/>
        <end position="84"/>
    </location>
</feature>
<feature type="transmembrane region" description="Helical" evidence="1">
    <location>
        <begin position="91"/>
        <end position="111"/>
    </location>
</feature>
<feature type="transmembrane region" description="Helical" evidence="1">
    <location>
        <begin position="114"/>
        <end position="134"/>
    </location>
</feature>
<feature type="transmembrane region" description="Helical" evidence="1">
    <location>
        <begin position="149"/>
        <end position="169"/>
    </location>
</feature>
<feature type="transmembrane region" description="Helical" evidence="1">
    <location>
        <begin position="194"/>
        <end position="214"/>
    </location>
</feature>
<feature type="transmembrane region" description="Helical" evidence="1">
    <location>
        <begin position="243"/>
        <end position="263"/>
    </location>
</feature>
<feature type="transmembrane region" description="Helical" evidence="1">
    <location>
        <begin position="277"/>
        <end position="297"/>
    </location>
</feature>
<feature type="transmembrane region" description="Helical" evidence="1">
    <location>
        <begin position="305"/>
        <end position="325"/>
    </location>
</feature>
<organism>
    <name type="scientific">Klebsiella pneumoniae subsp. pneumoniae (strain ATCC 700721 / MGH 78578)</name>
    <dbReference type="NCBI Taxonomy" id="272620"/>
    <lineage>
        <taxon>Bacteria</taxon>
        <taxon>Pseudomonadati</taxon>
        <taxon>Pseudomonadota</taxon>
        <taxon>Gammaproteobacteria</taxon>
        <taxon>Enterobacterales</taxon>
        <taxon>Enterobacteriaceae</taxon>
        <taxon>Klebsiella/Raoultella group</taxon>
        <taxon>Klebsiella</taxon>
        <taxon>Klebsiella pneumoniae complex</taxon>
    </lineage>
</organism>